<gene>
    <name evidence="1" type="primary">rplA</name>
    <name type="ordered locus">Lcho_3870</name>
</gene>
<name>RL1_LEPCP</name>
<sequence length="237" mass="24610">MAKLTKRQKAQVGKIETTKLYAVDDAIALIKEFAVAKFDESIDVAVQLGVDAKKSDQVVRGAVVMPNGTGKTKRVAVFTQGAKADEARAAGADIVGMDDLAAEVKAGNINFDVVIASPDAMRVVGQLGQILGPRGLMPNPKVGTVTADVATAVRNAKAGQVQFRVDKGGIIHGTIGRRSFDTDKLKGNLQALLDALNKAKPASSKGVYLRKVAVSSTMGVGVRVEVASITAGLAAQS</sequence>
<protein>
    <recommendedName>
        <fullName evidence="1">Large ribosomal subunit protein uL1</fullName>
    </recommendedName>
    <alternativeName>
        <fullName evidence="2">50S ribosomal protein L1</fullName>
    </alternativeName>
</protein>
<comment type="function">
    <text evidence="1">Binds directly to 23S rRNA. The L1 stalk is quite mobile in the ribosome, and is involved in E site tRNA release.</text>
</comment>
<comment type="function">
    <text evidence="1">Protein L1 is also a translational repressor protein, it controls the translation of the L11 operon by binding to its mRNA.</text>
</comment>
<comment type="subunit">
    <text evidence="1">Part of the 50S ribosomal subunit.</text>
</comment>
<comment type="similarity">
    <text evidence="1">Belongs to the universal ribosomal protein uL1 family.</text>
</comment>
<keyword id="KW-1185">Reference proteome</keyword>
<keyword id="KW-0678">Repressor</keyword>
<keyword id="KW-0687">Ribonucleoprotein</keyword>
<keyword id="KW-0689">Ribosomal protein</keyword>
<keyword id="KW-0694">RNA-binding</keyword>
<keyword id="KW-0699">rRNA-binding</keyword>
<keyword id="KW-0810">Translation regulation</keyword>
<keyword id="KW-0820">tRNA-binding</keyword>
<proteinExistence type="inferred from homology"/>
<reference key="1">
    <citation type="submission" date="2008-03" db="EMBL/GenBank/DDBJ databases">
        <title>Complete sequence of Leptothrix cholodnii SP-6.</title>
        <authorList>
            <consortium name="US DOE Joint Genome Institute"/>
            <person name="Copeland A."/>
            <person name="Lucas S."/>
            <person name="Lapidus A."/>
            <person name="Glavina del Rio T."/>
            <person name="Dalin E."/>
            <person name="Tice H."/>
            <person name="Bruce D."/>
            <person name="Goodwin L."/>
            <person name="Pitluck S."/>
            <person name="Chertkov O."/>
            <person name="Brettin T."/>
            <person name="Detter J.C."/>
            <person name="Han C."/>
            <person name="Kuske C.R."/>
            <person name="Schmutz J."/>
            <person name="Larimer F."/>
            <person name="Land M."/>
            <person name="Hauser L."/>
            <person name="Kyrpides N."/>
            <person name="Lykidis A."/>
            <person name="Emerson D."/>
            <person name="Richardson P."/>
        </authorList>
    </citation>
    <scope>NUCLEOTIDE SEQUENCE [LARGE SCALE GENOMIC DNA]</scope>
    <source>
        <strain>ATCC 51168 / LMG 8142 / SP-6</strain>
    </source>
</reference>
<feature type="chain" id="PRO_1000141423" description="Large ribosomal subunit protein uL1">
    <location>
        <begin position="1"/>
        <end position="237"/>
    </location>
</feature>
<accession>B1Y7H6</accession>
<organism>
    <name type="scientific">Leptothrix cholodnii (strain ATCC 51168 / LMG 8142 / SP-6)</name>
    <name type="common">Leptothrix discophora (strain SP-6)</name>
    <dbReference type="NCBI Taxonomy" id="395495"/>
    <lineage>
        <taxon>Bacteria</taxon>
        <taxon>Pseudomonadati</taxon>
        <taxon>Pseudomonadota</taxon>
        <taxon>Betaproteobacteria</taxon>
        <taxon>Burkholderiales</taxon>
        <taxon>Sphaerotilaceae</taxon>
        <taxon>Leptothrix</taxon>
    </lineage>
</organism>
<dbReference type="EMBL" id="CP001013">
    <property type="protein sequence ID" value="ACB36124.1"/>
    <property type="molecule type" value="Genomic_DNA"/>
</dbReference>
<dbReference type="RefSeq" id="WP_012348871.1">
    <property type="nucleotide sequence ID" value="NC_010524.1"/>
</dbReference>
<dbReference type="SMR" id="B1Y7H6"/>
<dbReference type="STRING" id="395495.Lcho_3870"/>
<dbReference type="KEGG" id="lch:Lcho_3870"/>
<dbReference type="eggNOG" id="COG0081">
    <property type="taxonomic scope" value="Bacteria"/>
</dbReference>
<dbReference type="HOGENOM" id="CLU_062853_0_0_4"/>
<dbReference type="OrthoDB" id="9803740at2"/>
<dbReference type="Proteomes" id="UP000001693">
    <property type="component" value="Chromosome"/>
</dbReference>
<dbReference type="GO" id="GO:0022625">
    <property type="term" value="C:cytosolic large ribosomal subunit"/>
    <property type="evidence" value="ECO:0007669"/>
    <property type="project" value="TreeGrafter"/>
</dbReference>
<dbReference type="GO" id="GO:0019843">
    <property type="term" value="F:rRNA binding"/>
    <property type="evidence" value="ECO:0007669"/>
    <property type="project" value="UniProtKB-UniRule"/>
</dbReference>
<dbReference type="GO" id="GO:0003735">
    <property type="term" value="F:structural constituent of ribosome"/>
    <property type="evidence" value="ECO:0007669"/>
    <property type="project" value="InterPro"/>
</dbReference>
<dbReference type="GO" id="GO:0000049">
    <property type="term" value="F:tRNA binding"/>
    <property type="evidence" value="ECO:0007669"/>
    <property type="project" value="UniProtKB-KW"/>
</dbReference>
<dbReference type="GO" id="GO:0006417">
    <property type="term" value="P:regulation of translation"/>
    <property type="evidence" value="ECO:0007669"/>
    <property type="project" value="UniProtKB-KW"/>
</dbReference>
<dbReference type="GO" id="GO:0006412">
    <property type="term" value="P:translation"/>
    <property type="evidence" value="ECO:0007669"/>
    <property type="project" value="UniProtKB-UniRule"/>
</dbReference>
<dbReference type="CDD" id="cd00403">
    <property type="entry name" value="Ribosomal_L1"/>
    <property type="match status" value="1"/>
</dbReference>
<dbReference type="FunFam" id="3.40.50.790:FF:000001">
    <property type="entry name" value="50S ribosomal protein L1"/>
    <property type="match status" value="1"/>
</dbReference>
<dbReference type="Gene3D" id="3.30.190.20">
    <property type="match status" value="1"/>
</dbReference>
<dbReference type="Gene3D" id="3.40.50.790">
    <property type="match status" value="1"/>
</dbReference>
<dbReference type="HAMAP" id="MF_01318_B">
    <property type="entry name" value="Ribosomal_uL1_B"/>
    <property type="match status" value="1"/>
</dbReference>
<dbReference type="InterPro" id="IPR005878">
    <property type="entry name" value="Ribosom_uL1_bac-type"/>
</dbReference>
<dbReference type="InterPro" id="IPR002143">
    <property type="entry name" value="Ribosomal_uL1"/>
</dbReference>
<dbReference type="InterPro" id="IPR023674">
    <property type="entry name" value="Ribosomal_uL1-like"/>
</dbReference>
<dbReference type="InterPro" id="IPR028364">
    <property type="entry name" value="Ribosomal_uL1/biogenesis"/>
</dbReference>
<dbReference type="InterPro" id="IPR016095">
    <property type="entry name" value="Ribosomal_uL1_3-a/b-sand"/>
</dbReference>
<dbReference type="InterPro" id="IPR023673">
    <property type="entry name" value="Ribosomal_uL1_CS"/>
</dbReference>
<dbReference type="NCBIfam" id="TIGR01169">
    <property type="entry name" value="rplA_bact"/>
    <property type="match status" value="1"/>
</dbReference>
<dbReference type="PANTHER" id="PTHR36427">
    <property type="entry name" value="54S RIBOSOMAL PROTEIN L1, MITOCHONDRIAL"/>
    <property type="match status" value="1"/>
</dbReference>
<dbReference type="PANTHER" id="PTHR36427:SF3">
    <property type="entry name" value="LARGE RIBOSOMAL SUBUNIT PROTEIN UL1M"/>
    <property type="match status" value="1"/>
</dbReference>
<dbReference type="Pfam" id="PF00687">
    <property type="entry name" value="Ribosomal_L1"/>
    <property type="match status" value="1"/>
</dbReference>
<dbReference type="PIRSF" id="PIRSF002155">
    <property type="entry name" value="Ribosomal_L1"/>
    <property type="match status" value="1"/>
</dbReference>
<dbReference type="SUPFAM" id="SSF56808">
    <property type="entry name" value="Ribosomal protein L1"/>
    <property type="match status" value="1"/>
</dbReference>
<dbReference type="PROSITE" id="PS01199">
    <property type="entry name" value="RIBOSOMAL_L1"/>
    <property type="match status" value="1"/>
</dbReference>
<evidence type="ECO:0000255" key="1">
    <source>
        <dbReference type="HAMAP-Rule" id="MF_01318"/>
    </source>
</evidence>
<evidence type="ECO:0000305" key="2"/>